<gene>
    <name evidence="1" type="primary">glyQ</name>
    <name type="ordered locus">FTL_0489</name>
</gene>
<proteinExistence type="inferred from homology"/>
<accession>Q2A4U1</accession>
<keyword id="KW-0030">Aminoacyl-tRNA synthetase</keyword>
<keyword id="KW-0067">ATP-binding</keyword>
<keyword id="KW-0963">Cytoplasm</keyword>
<keyword id="KW-0436">Ligase</keyword>
<keyword id="KW-0547">Nucleotide-binding</keyword>
<keyword id="KW-0648">Protein biosynthesis</keyword>
<keyword id="KW-1185">Reference proteome</keyword>
<dbReference type="EC" id="6.1.1.14" evidence="1"/>
<dbReference type="EMBL" id="AM233362">
    <property type="protein sequence ID" value="CAJ78929.1"/>
    <property type="molecule type" value="Genomic_DNA"/>
</dbReference>
<dbReference type="RefSeq" id="WP_003027043.1">
    <property type="nucleotide sequence ID" value="NZ_CP009694.1"/>
</dbReference>
<dbReference type="SMR" id="Q2A4U1"/>
<dbReference type="KEGG" id="ftl:FTL_0489"/>
<dbReference type="Proteomes" id="UP000001944">
    <property type="component" value="Chromosome"/>
</dbReference>
<dbReference type="GO" id="GO:0005829">
    <property type="term" value="C:cytosol"/>
    <property type="evidence" value="ECO:0007669"/>
    <property type="project" value="TreeGrafter"/>
</dbReference>
<dbReference type="GO" id="GO:0005524">
    <property type="term" value="F:ATP binding"/>
    <property type="evidence" value="ECO:0007669"/>
    <property type="project" value="UniProtKB-UniRule"/>
</dbReference>
<dbReference type="GO" id="GO:0004820">
    <property type="term" value="F:glycine-tRNA ligase activity"/>
    <property type="evidence" value="ECO:0007669"/>
    <property type="project" value="UniProtKB-UniRule"/>
</dbReference>
<dbReference type="GO" id="GO:0006426">
    <property type="term" value="P:glycyl-tRNA aminoacylation"/>
    <property type="evidence" value="ECO:0007669"/>
    <property type="project" value="UniProtKB-UniRule"/>
</dbReference>
<dbReference type="CDD" id="cd00733">
    <property type="entry name" value="GlyRS_alpha_core"/>
    <property type="match status" value="1"/>
</dbReference>
<dbReference type="FunFam" id="3.30.930.10:FF:000006">
    <property type="entry name" value="Glycine--tRNA ligase alpha subunit"/>
    <property type="match status" value="1"/>
</dbReference>
<dbReference type="Gene3D" id="3.30.930.10">
    <property type="entry name" value="Bira Bifunctional Protein, Domain 2"/>
    <property type="match status" value="1"/>
</dbReference>
<dbReference type="Gene3D" id="1.20.58.180">
    <property type="entry name" value="Class II aaRS and biotin synthetases, domain 2"/>
    <property type="match status" value="1"/>
</dbReference>
<dbReference type="HAMAP" id="MF_00254">
    <property type="entry name" value="Gly_tRNA_synth_alpha"/>
    <property type="match status" value="1"/>
</dbReference>
<dbReference type="InterPro" id="IPR045864">
    <property type="entry name" value="aa-tRNA-synth_II/BPL/LPL"/>
</dbReference>
<dbReference type="InterPro" id="IPR006194">
    <property type="entry name" value="Gly-tRNA-synth_heterodimer"/>
</dbReference>
<dbReference type="InterPro" id="IPR002310">
    <property type="entry name" value="Gly-tRNA_ligase_asu"/>
</dbReference>
<dbReference type="NCBIfam" id="TIGR00388">
    <property type="entry name" value="glyQ"/>
    <property type="match status" value="1"/>
</dbReference>
<dbReference type="NCBIfam" id="NF006827">
    <property type="entry name" value="PRK09348.1"/>
    <property type="match status" value="1"/>
</dbReference>
<dbReference type="PANTHER" id="PTHR30075:SF2">
    <property type="entry name" value="GLYCINE--TRNA LIGASE, CHLOROPLASTIC_MITOCHONDRIAL 2"/>
    <property type="match status" value="1"/>
</dbReference>
<dbReference type="PANTHER" id="PTHR30075">
    <property type="entry name" value="GLYCYL-TRNA SYNTHETASE"/>
    <property type="match status" value="1"/>
</dbReference>
<dbReference type="Pfam" id="PF02091">
    <property type="entry name" value="tRNA-synt_2e"/>
    <property type="match status" value="1"/>
</dbReference>
<dbReference type="PRINTS" id="PR01044">
    <property type="entry name" value="TRNASYNTHGA"/>
</dbReference>
<dbReference type="SUPFAM" id="SSF55681">
    <property type="entry name" value="Class II aaRS and biotin synthetases"/>
    <property type="match status" value="1"/>
</dbReference>
<dbReference type="PROSITE" id="PS50861">
    <property type="entry name" value="AA_TRNA_LIGASE_II_GLYAB"/>
    <property type="match status" value="1"/>
</dbReference>
<name>SYGA_FRATH</name>
<feature type="chain" id="PRO_1000101192" description="Glycine--tRNA ligase alpha subunit">
    <location>
        <begin position="1"/>
        <end position="296"/>
    </location>
</feature>
<reference key="1">
    <citation type="submission" date="2006-03" db="EMBL/GenBank/DDBJ databases">
        <title>Complete genome sequence of Francisella tularensis LVS (Live Vaccine Strain).</title>
        <authorList>
            <person name="Chain P."/>
            <person name="Larimer F."/>
            <person name="Land M."/>
            <person name="Stilwagen S."/>
            <person name="Larsson P."/>
            <person name="Bearden S."/>
            <person name="Chu M."/>
            <person name="Oyston P."/>
            <person name="Forsman M."/>
            <person name="Andersson S."/>
            <person name="Lindler L."/>
            <person name="Titball R."/>
            <person name="Garcia E."/>
        </authorList>
    </citation>
    <scope>NUCLEOTIDE SEQUENCE [LARGE SCALE GENOMIC DNA]</scope>
    <source>
        <strain>LVS</strain>
    </source>
</reference>
<protein>
    <recommendedName>
        <fullName evidence="1">Glycine--tRNA ligase alpha subunit</fullName>
        <ecNumber evidence="1">6.1.1.14</ecNumber>
    </recommendedName>
    <alternativeName>
        <fullName evidence="1">Glycyl-tRNA synthetase alpha subunit</fullName>
        <shortName evidence="1">GlyRS</shortName>
    </alternativeName>
</protein>
<comment type="catalytic activity">
    <reaction evidence="1">
        <text>tRNA(Gly) + glycine + ATP = glycyl-tRNA(Gly) + AMP + diphosphate</text>
        <dbReference type="Rhea" id="RHEA:16013"/>
        <dbReference type="Rhea" id="RHEA-COMP:9664"/>
        <dbReference type="Rhea" id="RHEA-COMP:9683"/>
        <dbReference type="ChEBI" id="CHEBI:30616"/>
        <dbReference type="ChEBI" id="CHEBI:33019"/>
        <dbReference type="ChEBI" id="CHEBI:57305"/>
        <dbReference type="ChEBI" id="CHEBI:78442"/>
        <dbReference type="ChEBI" id="CHEBI:78522"/>
        <dbReference type="ChEBI" id="CHEBI:456215"/>
        <dbReference type="EC" id="6.1.1.14"/>
    </reaction>
</comment>
<comment type="subunit">
    <text evidence="1">Tetramer of two alpha and two beta subunits.</text>
</comment>
<comment type="subcellular location">
    <subcellularLocation>
        <location evidence="1">Cytoplasm</location>
    </subcellularLocation>
</comment>
<comment type="similarity">
    <text evidence="1">Belongs to the class-II aminoacyl-tRNA synthetase family.</text>
</comment>
<sequence>MLTFQEIILKLHHYWASKGCAIVQPLDMEVGAGTFHPATTLRAIGPEPWTAAYVQPSRRPTDGRYGENPNRTQHYYQYQVVMKPSPDDIQELYLGSLRELGIDPLENDIRFVEDNWESPTLGAWGLGWEVWSNGMEITQFTYFQQVGGLECKPVMGEITYGLERLAMYIQNVDSMYDILWANTQNGPLYYRDVFLQNEVEMSTYNFEEANVEELFKQFDLLEKEGYRLVEKNLPIPAYEFVLKASHTFNLLDARHAISVTERQGYILRVRKLALEVAKEYYSAREKSGFPAFKKDN</sequence>
<evidence type="ECO:0000255" key="1">
    <source>
        <dbReference type="HAMAP-Rule" id="MF_00254"/>
    </source>
</evidence>
<organism>
    <name type="scientific">Francisella tularensis subsp. holarctica (strain LVS)</name>
    <dbReference type="NCBI Taxonomy" id="376619"/>
    <lineage>
        <taxon>Bacteria</taxon>
        <taxon>Pseudomonadati</taxon>
        <taxon>Pseudomonadota</taxon>
        <taxon>Gammaproteobacteria</taxon>
        <taxon>Thiotrichales</taxon>
        <taxon>Francisellaceae</taxon>
        <taxon>Francisella</taxon>
    </lineage>
</organism>